<evidence type="ECO:0000250" key="1">
    <source>
        <dbReference type="UniProtKB" id="P12807"/>
    </source>
</evidence>
<evidence type="ECO:0000250" key="2">
    <source>
        <dbReference type="UniProtKB" id="Q43077"/>
    </source>
</evidence>
<evidence type="ECO:0000256" key="3">
    <source>
        <dbReference type="SAM" id="MobiDB-lite"/>
    </source>
</evidence>
<evidence type="ECO:0000269" key="4">
    <source>
    </source>
</evidence>
<evidence type="ECO:0000269" key="5">
    <source>
    </source>
</evidence>
<evidence type="ECO:0000269" key="6">
    <source>
    </source>
</evidence>
<evidence type="ECO:0000269" key="7">
    <source>
    </source>
</evidence>
<evidence type="ECO:0000269" key="8">
    <source>
    </source>
</evidence>
<evidence type="ECO:0000269" key="9">
    <source>
    </source>
</evidence>
<evidence type="ECO:0000305" key="10"/>
<evidence type="ECO:0007744" key="11">
    <source>
        <dbReference type="PDB" id="1D6U"/>
    </source>
</evidence>
<evidence type="ECO:0007744" key="12">
    <source>
        <dbReference type="PDB" id="1D6Y"/>
    </source>
</evidence>
<evidence type="ECO:0007744" key="13">
    <source>
        <dbReference type="PDB" id="1D6Z"/>
    </source>
</evidence>
<evidence type="ECO:0007744" key="14">
    <source>
        <dbReference type="PDB" id="1DYU"/>
    </source>
</evidence>
<evidence type="ECO:0007744" key="15">
    <source>
        <dbReference type="PDB" id="1JRQ"/>
    </source>
</evidence>
<evidence type="ECO:0007744" key="16">
    <source>
        <dbReference type="PDB" id="1LVN"/>
    </source>
</evidence>
<evidence type="ECO:0007744" key="17">
    <source>
        <dbReference type="PDB" id="1OAC"/>
    </source>
</evidence>
<evidence type="ECO:0007744" key="18">
    <source>
        <dbReference type="PDB" id="1QAF"/>
    </source>
</evidence>
<evidence type="ECO:0007744" key="19">
    <source>
        <dbReference type="PDB" id="1QAK"/>
    </source>
</evidence>
<evidence type="ECO:0007744" key="20">
    <source>
        <dbReference type="PDB" id="1QAL"/>
    </source>
</evidence>
<evidence type="ECO:0007744" key="21">
    <source>
        <dbReference type="PDB" id="1SPU"/>
    </source>
</evidence>
<evidence type="ECO:0007744" key="22">
    <source>
        <dbReference type="PDB" id="2W0Q"/>
    </source>
</evidence>
<evidence type="ECO:0007744" key="23">
    <source>
        <dbReference type="PDB" id="2WGQ"/>
    </source>
</evidence>
<evidence type="ECO:0007744" key="24">
    <source>
        <dbReference type="PDB" id="2WO0"/>
    </source>
</evidence>
<evidence type="ECO:0007744" key="25">
    <source>
        <dbReference type="PDB" id="2WOF"/>
    </source>
</evidence>
<evidence type="ECO:0007744" key="26">
    <source>
        <dbReference type="PDB" id="2WOH"/>
    </source>
</evidence>
<evidence type="ECO:0007829" key="27">
    <source>
        <dbReference type="PDB" id="1D6Y"/>
    </source>
</evidence>
<evidence type="ECO:0007829" key="28">
    <source>
        <dbReference type="PDB" id="1OAC"/>
    </source>
</evidence>
<evidence type="ECO:0007829" key="29">
    <source>
        <dbReference type="PDB" id="1QAF"/>
    </source>
</evidence>
<evidence type="ECO:0007829" key="30">
    <source>
        <dbReference type="PDB" id="1QAK"/>
    </source>
</evidence>
<evidence type="ECO:0007829" key="31">
    <source>
        <dbReference type="PDB" id="6EZZ"/>
    </source>
</evidence>
<sequence length="757" mass="84379">MGSPSLYSARKTTLALAVALSFAWQAPVFAHGGEAHMVPMDKTLKEFGADVQWDDYAQLFTLIKDGAYVKVKPGAQTAIVNGQPLALQVPVVMKDNKAWVSDTFINDVFQSGLDQTFQVEKRPHPLNALTADEIKQAVEIVKASADFKPNTRFTEISLLPPDKEAVWAFALENKPVDQPRKADVIMLDGKHIIEAVVDLQNNKLLSWQPIKDAHGMVLLDDFASVQNIINNSEEFAAAVKKRGITDAKKVITTPLTVGYFDGKDGLKQDARLLKVISYLDVGDGNYWAHPIENLVAVVDLEQKKIVKIEEGPVVPVPMTARPFDGRDRVAPAVKPMQIIEPEGKNYTITGDMIHWRNWDFHLSMNSRVGPMISTVTYNDNGTKRKVMYEGSLGGMIVPYGDPDIGWYFKAYLDSGDYGMGTLTSPIARGKDAPSNAVLLNETIADYTGVPMEIPRAIAVFERYAGPEYKHQEMGQPNVSTERRELVVRWISTVGNYDYIFDWIFHENGTIGIDAGATGIEAVKGVKAKTMHDETAKDDTRYGTLIDHNIVGTTHQHIYNFRLDLDVDGENNSLVAMDPVVKPNTAGGPRTSTMQVNQYNIGNEQDAAQKFDPGTIRLLSNPNKENRMGNPVSYQIIPYAGGTHPVAKGAQFAPDEWIYHRLSFMDKQLWVTRYHPGERFPEGKYPNRSTHDTGLGQYSKDNESLDNTDAVVWMTTGTTHVARAEEWPIMPTEWVHTLLKPWNFFDETPTLGALKKDK</sequence>
<accession>P46883</accession>
<accession>O53008</accession>
<accession>P78153</accession>
<keyword id="KW-0002">3D-structure</keyword>
<keyword id="KW-0106">Calcium</keyword>
<keyword id="KW-0186">Copper</keyword>
<keyword id="KW-0903">Direct protein sequencing</keyword>
<keyword id="KW-0464">Manganese</keyword>
<keyword id="KW-0479">Metal-binding</keyword>
<keyword id="KW-0560">Oxidoreductase</keyword>
<keyword id="KW-0574">Periplasm</keyword>
<keyword id="KW-1185">Reference proteome</keyword>
<keyword id="KW-0732">Signal</keyword>
<keyword id="KW-0801">TPQ</keyword>
<reference key="1">
    <citation type="journal article" date="1994" name="J. Ferment. Bioeng.">
        <title>Nucleotide sequence of the gene for monoamine oxidase (maoA) from Escherichia coli.</title>
        <authorList>
            <person name="Azakami H."/>
            <person name="Yamashita M."/>
            <person name="Roh J.-H."/>
            <person name="Suzuki H."/>
            <person name="Kumagai H."/>
            <person name="Murooka Y."/>
        </authorList>
    </citation>
    <scope>NUCLEOTIDE SEQUENCE [GENOMIC DNA]</scope>
    <source>
        <strain>K12 / W3110 / ATCC 27325 / DSM 5911</strain>
    </source>
</reference>
<reference key="2">
    <citation type="journal article" date="1995" name="Structure">
        <title>Crystal structure of a quinoenzyme: copper amine oxidase of Escherichia coli at 2-A resolution.</title>
        <authorList>
            <person name="Parsons M.R."/>
            <person name="Convery M.A."/>
            <person name="Wilmot C.M."/>
            <person name="Yadav K.D.S."/>
            <person name="Blakeley V."/>
            <person name="Corner A.S."/>
            <person name="Phillips S.E.V."/>
            <person name="McPherson M.J."/>
            <person name="Knowles P.F."/>
        </authorList>
    </citation>
    <scope>NUCLEOTIDE SEQUENCE [GENOMIC DNA]</scope>
    <scope>X-RAY CRYSTALLOGRAPHY (2.0 ANGSTROMS)</scope>
    <source>
        <strain>K12 / K10</strain>
    </source>
</reference>
<reference key="3">
    <citation type="journal article" date="1996" name="Eur. J. Biochem.">
        <title>Cloning of the maoA gene that encodes aromatic amine oxidase of Escherichia coli W3350 and characterization of the overexpressed enzyme.</title>
        <authorList>
            <person name="Steinebach V."/>
            <person name="Benen J.A.E."/>
            <person name="Bader R."/>
            <person name="Postma P.W."/>
            <person name="De Vries S."/>
            <person name="Duine J.A."/>
        </authorList>
    </citation>
    <scope>NUCLEOTIDE SEQUENCE [GENOMIC DNA]</scope>
    <scope>PROTEIN SEQUENCE OF 31-35</scope>
    <scope>CHARACTERIZATION</scope>
    <source>
        <strain>K12 / W3350 / ATCC 27020</strain>
    </source>
</reference>
<reference key="4">
    <citation type="journal article" date="1996" name="DNA Res.">
        <title>A 570-kb DNA sequence of the Escherichia coli K-12 genome corresponding to the 28.0-40.1 min region on the linkage map.</title>
        <authorList>
            <person name="Aiba H."/>
            <person name="Baba T."/>
            <person name="Fujita K."/>
            <person name="Hayashi K."/>
            <person name="Inada T."/>
            <person name="Isono K."/>
            <person name="Itoh T."/>
            <person name="Kasai H."/>
            <person name="Kashimoto K."/>
            <person name="Kimura S."/>
            <person name="Kitakawa M."/>
            <person name="Kitagawa M."/>
            <person name="Makino K."/>
            <person name="Miki T."/>
            <person name="Mizobuchi K."/>
            <person name="Mori H."/>
            <person name="Mori T."/>
            <person name="Motomura K."/>
            <person name="Nakade S."/>
            <person name="Nakamura Y."/>
            <person name="Nashimoto H."/>
            <person name="Nishio Y."/>
            <person name="Oshima T."/>
            <person name="Saito N."/>
            <person name="Sampei G."/>
            <person name="Seki Y."/>
            <person name="Sivasundaram S."/>
            <person name="Tagami H."/>
            <person name="Takeda J."/>
            <person name="Takemoto K."/>
            <person name="Takeuchi Y."/>
            <person name="Wada C."/>
            <person name="Yamamoto Y."/>
            <person name="Horiuchi T."/>
        </authorList>
    </citation>
    <scope>NUCLEOTIDE SEQUENCE [LARGE SCALE GENOMIC DNA]</scope>
    <source>
        <strain>K12 / W3110 / ATCC 27325 / DSM 5911</strain>
    </source>
</reference>
<reference key="5">
    <citation type="journal article" date="1997" name="Science">
        <title>The complete genome sequence of Escherichia coli K-12.</title>
        <authorList>
            <person name="Blattner F.R."/>
            <person name="Plunkett G. III"/>
            <person name="Bloch C.A."/>
            <person name="Perna N.T."/>
            <person name="Burland V."/>
            <person name="Riley M."/>
            <person name="Collado-Vides J."/>
            <person name="Glasner J.D."/>
            <person name="Rode C.K."/>
            <person name="Mayhew G.F."/>
            <person name="Gregor J."/>
            <person name="Davis N.W."/>
            <person name="Kirkpatrick H.A."/>
            <person name="Goeden M.A."/>
            <person name="Rose D.J."/>
            <person name="Mau B."/>
            <person name="Shao Y."/>
        </authorList>
    </citation>
    <scope>NUCLEOTIDE SEQUENCE [LARGE SCALE GENOMIC DNA]</scope>
    <source>
        <strain>K12 / MG1655 / ATCC 47076</strain>
    </source>
</reference>
<reference key="6">
    <citation type="journal article" date="2006" name="Mol. Syst. Biol.">
        <title>Highly accurate genome sequences of Escherichia coli K-12 strains MG1655 and W3110.</title>
        <authorList>
            <person name="Hayashi K."/>
            <person name="Morooka N."/>
            <person name="Yamamoto Y."/>
            <person name="Fujita K."/>
            <person name="Isono K."/>
            <person name="Choi S."/>
            <person name="Ohtsubo E."/>
            <person name="Baba T."/>
            <person name="Wanner B.L."/>
            <person name="Mori H."/>
            <person name="Horiuchi T."/>
        </authorList>
    </citation>
    <scope>NUCLEOTIDE SEQUENCE [LARGE SCALE GENOMIC DNA]</scope>
    <source>
        <strain>K12 / W3110 / ATCC 27325 / DSM 5911</strain>
    </source>
</reference>
<reference key="7">
    <citation type="journal article" date="1998" name="J. Biol. Chem.">
        <title>Catabolism of phenylacetic acid in Escherichia coli. Characterization of a new aerobic hybrid pathway.</title>
        <authorList>
            <person name="Ferrandez A."/>
            <person name="Minambres B."/>
            <person name="Garcia B."/>
            <person name="Olivera E.R."/>
            <person name="Luengo J.M."/>
            <person name="Garcia J.L."/>
            <person name="Diaz E."/>
        </authorList>
    </citation>
    <scope>NUCLEOTIDE SEQUENCE [GENOMIC DNA] OF 1-59</scope>
    <source>
        <strain>W / ATCC 11105 / DSM 1900</strain>
    </source>
</reference>
<reference key="8">
    <citation type="journal article" date="1997" name="FEBS Lett.">
        <title>Molecular characterization of PadA, a phenylacetaldehyde dehydrogenase from Escherichia coli.</title>
        <authorList>
            <person name="Ferrandez A."/>
            <person name="Prieto M.A."/>
            <person name="Garcia J.L."/>
            <person name="Diaz E."/>
        </authorList>
    </citation>
    <scope>NUCLEOTIDE SEQUENCE [GENOMIC DNA] OF 477-757</scope>
    <source>
        <strain>W / ATCC 11105 / DSM 1900</strain>
    </source>
</reference>
<reference key="9">
    <citation type="journal article" date="1996" name="J. Bacteriol.">
        <title>maoB, a gene that encodes a positive regulator of the monoamine oxidase gene (maoA) in Escherichia coli.</title>
        <authorList>
            <person name="Yamashita M."/>
            <person name="Azakami H."/>
            <person name="Yokoro N."/>
            <person name="Roh J.-H."/>
            <person name="Suzuki H."/>
            <person name="Kumagai H."/>
            <person name="Murooka Y."/>
        </authorList>
    </citation>
    <scope>PROTEIN SEQUENCE OF 31-50</scope>
</reference>
<reference key="10">
    <citation type="journal article" date="1997" name="Microbiology">
        <title>2-phenylethylamine catabolism by Escherichia coli K-12: gene organization and expression.</title>
        <authorList>
            <person name="Hanlon S.P."/>
            <person name="Hill T.K."/>
            <person name="Flavell M.A."/>
            <person name="Stringfellow J.M."/>
            <person name="Cooper R.A."/>
        </authorList>
    </citation>
    <scope>PROTEIN SEQUENCE OF 31-40</scope>
    <source>
        <strain>K12</strain>
    </source>
</reference>
<reference key="11">
    <citation type="journal article" date="1997" name="Biochemistry">
        <title>Catalytic mechanism of the quinoenzyme amine oxidase from Escherichia coli: exploring the reductive half-reaction.</title>
        <authorList>
            <person name="Wilmot C.M."/>
            <person name="Murray J.M."/>
            <person name="Alton G."/>
            <person name="Parsons M.R."/>
            <person name="Convery M.A."/>
            <person name="Blakeley V."/>
            <person name="Corner A.S."/>
            <person name="Palcic M.M."/>
            <person name="Knowles P.F."/>
            <person name="McPherson M.J."/>
            <person name="Phillips S.E.V."/>
        </authorList>
    </citation>
    <scope>X-RAY CRYSTALLOGRAPHY (2.00 ANGSTROMS) OF 31-757 IN COMPLEX WITH CALCIUM; COPPER AND SUBSTRATE</scope>
    <scope>ACTIVITY REGULATION</scope>
    <scope>CATALYTIC ACTIVITY</scope>
    <scope>ACTIVE SITE</scope>
    <scope>SUBUNIT</scope>
</reference>
<reference key="12">
    <citation type="journal article" date="1999" name="Biochemistry">
        <title>The active site base controls cofactor reactivity in Escherichia coli amine oxidase: X-ray crystallographic studies with mutational variants.</title>
        <authorList>
            <person name="Murray J.M."/>
            <person name="Saysell C.G."/>
            <person name="Wilmot C.M."/>
            <person name="Tambyrajah W.S."/>
            <person name="Jaeger J."/>
            <person name="Knowles P.F."/>
            <person name="Phillips S.E.V."/>
            <person name="McPherson M.J."/>
        </authorList>
    </citation>
    <scope>X-RAY CRYSTALLOGRAPHY (2.00 ANGSTROMS) OF 36-757 IN COMPLEX WITH CALCIUM AND COPPER</scope>
    <scope>TOPAQUINONE AT TYR-496</scope>
    <scope>ACTIVE SITE</scope>
    <scope>CATALYTIC ACTIVITY</scope>
    <scope>SUBUNIT</scope>
</reference>
<reference key="13">
    <citation type="journal article" date="1999" name="Science">
        <title>Visualization of dioxygen bound to copper during enzyme catalysis.</title>
        <authorList>
            <person name="Wilmot C.M."/>
            <person name="Hajdu J."/>
            <person name="McPherson M.J."/>
            <person name="Knowles P.F."/>
            <person name="Phillips S.E."/>
        </authorList>
    </citation>
    <scope>X-RAY CRYSTALLOGRAPHY (2.10 ANGSTROMS) OF 31-757 IN COMPLEX WITH CALCIUM; COPPER AND SUBSTRATE</scope>
    <scope>CATALYTIC ACTIVITY</scope>
    <scope>SUBUNIT</scope>
</reference>
<proteinExistence type="evidence at protein level"/>
<gene>
    <name type="primary">tynA</name>
    <name type="synonym">maoA</name>
    <name type="ordered locus">b1386</name>
    <name type="ordered locus">JW1381</name>
</gene>
<dbReference type="EC" id="1.4.3.21" evidence="4 5 9"/>
<dbReference type="EMBL" id="D23670">
    <property type="protein sequence ID" value="BAA04900.1"/>
    <property type="molecule type" value="Genomic_DNA"/>
</dbReference>
<dbReference type="EMBL" id="L47571">
    <property type="protein sequence ID" value="AAC37012.1"/>
    <property type="molecule type" value="Genomic_DNA"/>
</dbReference>
<dbReference type="EMBL" id="U00096">
    <property type="protein sequence ID" value="AAC74468.1"/>
    <property type="molecule type" value="Genomic_DNA"/>
</dbReference>
<dbReference type="EMBL" id="AP009048">
    <property type="protein sequence ID" value="BAA14996.1"/>
    <property type="molecule type" value="Genomic_DNA"/>
</dbReference>
<dbReference type="EMBL" id="X97452">
    <property type="protein sequence ID" value="CAA66104.1"/>
    <property type="molecule type" value="Genomic_DNA"/>
</dbReference>
<dbReference type="EMBL" id="X97453">
    <property type="protein sequence ID" value="CAA66107.1"/>
    <property type="molecule type" value="Genomic_DNA"/>
</dbReference>
<dbReference type="PIR" id="E64889">
    <property type="entry name" value="E64889"/>
</dbReference>
<dbReference type="RefSeq" id="NP_415904.3">
    <property type="nucleotide sequence ID" value="NC_000913.3"/>
</dbReference>
<dbReference type="RefSeq" id="WP_000535469.1">
    <property type="nucleotide sequence ID" value="NZ_SSZK01000012.1"/>
</dbReference>
<dbReference type="PDB" id="1D6U">
    <property type="method" value="X-ray"/>
    <property type="resolution" value="2.40 A"/>
    <property type="chains" value="A/B=31-757"/>
</dbReference>
<dbReference type="PDB" id="1D6Y">
    <property type="method" value="X-ray"/>
    <property type="resolution" value="2.40 A"/>
    <property type="chains" value="A/B=31-757"/>
</dbReference>
<dbReference type="PDB" id="1D6Z">
    <property type="method" value="X-ray"/>
    <property type="resolution" value="2.10 A"/>
    <property type="chains" value="A/B=31-757"/>
</dbReference>
<dbReference type="PDB" id="1DYU">
    <property type="method" value="X-ray"/>
    <property type="resolution" value="2.04 A"/>
    <property type="chains" value="A/B=31-757"/>
</dbReference>
<dbReference type="PDB" id="1JRQ">
    <property type="method" value="X-ray"/>
    <property type="resolution" value="2.15 A"/>
    <property type="chains" value="A/B=31-757"/>
</dbReference>
<dbReference type="PDB" id="1LVN">
    <property type="method" value="X-ray"/>
    <property type="resolution" value="2.40 A"/>
    <property type="chains" value="A/B=31-757"/>
</dbReference>
<dbReference type="PDB" id="1OAC">
    <property type="method" value="X-ray"/>
    <property type="resolution" value="2.00 A"/>
    <property type="chains" value="A/B=31-757"/>
</dbReference>
<dbReference type="PDB" id="1QAF">
    <property type="method" value="X-ray"/>
    <property type="resolution" value="2.20 A"/>
    <property type="chains" value="A/B=36-756"/>
</dbReference>
<dbReference type="PDB" id="1QAK">
    <property type="method" value="X-ray"/>
    <property type="resolution" value="2.00 A"/>
    <property type="chains" value="A/B=36-757"/>
</dbReference>
<dbReference type="PDB" id="1QAL">
    <property type="method" value="X-ray"/>
    <property type="resolution" value="2.20 A"/>
    <property type="chains" value="A/B=36-756"/>
</dbReference>
<dbReference type="PDB" id="1SPU">
    <property type="method" value="X-ray"/>
    <property type="resolution" value="2.00 A"/>
    <property type="chains" value="A/B=31-757"/>
</dbReference>
<dbReference type="PDB" id="2W0Q">
    <property type="method" value="X-ray"/>
    <property type="resolution" value="2.48 A"/>
    <property type="chains" value="A/B=31-757"/>
</dbReference>
<dbReference type="PDB" id="2WGQ">
    <property type="method" value="X-ray"/>
    <property type="resolution" value="2.50 A"/>
    <property type="chains" value="A/B=31-757"/>
</dbReference>
<dbReference type="PDB" id="2WO0">
    <property type="method" value="X-ray"/>
    <property type="resolution" value="2.60 A"/>
    <property type="chains" value="A/B=31-757"/>
</dbReference>
<dbReference type="PDB" id="2WOF">
    <property type="method" value="X-ray"/>
    <property type="resolution" value="2.25 A"/>
    <property type="chains" value="A/B=31-757"/>
</dbReference>
<dbReference type="PDB" id="2WOH">
    <property type="method" value="X-ray"/>
    <property type="resolution" value="2.70 A"/>
    <property type="chains" value="A/B=31-757"/>
</dbReference>
<dbReference type="PDB" id="6EZZ">
    <property type="method" value="X-ray"/>
    <property type="resolution" value="1.80 A"/>
    <property type="chains" value="A/B=31-757"/>
</dbReference>
<dbReference type="PDBsum" id="1D6U"/>
<dbReference type="PDBsum" id="1D6Y"/>
<dbReference type="PDBsum" id="1D6Z"/>
<dbReference type="PDBsum" id="1DYU"/>
<dbReference type="PDBsum" id="1JRQ"/>
<dbReference type="PDBsum" id="1LVN"/>
<dbReference type="PDBsum" id="1OAC"/>
<dbReference type="PDBsum" id="1QAF"/>
<dbReference type="PDBsum" id="1QAK"/>
<dbReference type="PDBsum" id="1QAL"/>
<dbReference type="PDBsum" id="1SPU"/>
<dbReference type="PDBsum" id="2W0Q"/>
<dbReference type="PDBsum" id="2WGQ"/>
<dbReference type="PDBsum" id="2WO0"/>
<dbReference type="PDBsum" id="2WOF"/>
<dbReference type="PDBsum" id="2WOH"/>
<dbReference type="PDBsum" id="6EZZ"/>
<dbReference type="SMR" id="P46883"/>
<dbReference type="BioGRID" id="4260177">
    <property type="interactions" value="18"/>
</dbReference>
<dbReference type="DIP" id="DIP-11057N"/>
<dbReference type="FunCoup" id="P46883">
    <property type="interactions" value="165"/>
</dbReference>
<dbReference type="IntAct" id="P46883">
    <property type="interactions" value="6"/>
</dbReference>
<dbReference type="STRING" id="511145.b1386"/>
<dbReference type="DrugBank" id="DB01657">
    <property type="generic name" value="2-amino-3-[4-hydroxy-6-oxo-3-(2-phenyl-cyclopropylimino)-cyclohexa-1,4-dienyl]-propionic acid"/>
</dbReference>
<dbReference type="DrugBank" id="DB01634">
    <property type="generic name" value="2-Oxy-4-Hydroxy-5-(2-Hydrazinopyridine)Phenylalanine"/>
</dbReference>
<dbReference type="DrugBank" id="DB03631">
    <property type="generic name" value="3-(4-hydroxy-3-imino-6-oxo-cyclohexa-1,4-dienyl)-alanine"/>
</dbReference>
<dbReference type="DrugBank" id="DB02928">
    <property type="generic name" value="3-Amino-6-Hydroxy-Tyrosine"/>
</dbReference>
<dbReference type="DrugBank" id="DB04334">
    <property type="generic name" value="6-hydroxydopa quinone"/>
</dbReference>
<dbReference type="DrugBank" id="DB01576">
    <property type="generic name" value="Dextroamphetamine"/>
</dbReference>
<dbReference type="DrugBank" id="DB04325">
    <property type="generic name" value="Phenethylamine"/>
</dbReference>
<dbReference type="DrugBank" id="DB02178">
    <property type="generic name" value="Phenylacetaldehyde"/>
</dbReference>
<dbReference type="PaxDb" id="511145-b1386"/>
<dbReference type="EnsemblBacteria" id="AAC74468">
    <property type="protein sequence ID" value="AAC74468"/>
    <property type="gene ID" value="b1386"/>
</dbReference>
<dbReference type="GeneID" id="945939"/>
<dbReference type="KEGG" id="ecj:JW1381"/>
<dbReference type="KEGG" id="eco:b1386"/>
<dbReference type="KEGG" id="ecoc:C3026_08095"/>
<dbReference type="PATRIC" id="fig|1411691.4.peg.886"/>
<dbReference type="EchoBASE" id="EB2934"/>
<dbReference type="eggNOG" id="COG3733">
    <property type="taxonomic scope" value="Bacteria"/>
</dbReference>
<dbReference type="HOGENOM" id="CLU_011500_5_0_6"/>
<dbReference type="InParanoid" id="P46883"/>
<dbReference type="OMA" id="VHVGFNY"/>
<dbReference type="OrthoDB" id="9772590at2"/>
<dbReference type="PhylomeDB" id="P46883"/>
<dbReference type="BioCyc" id="EcoCyc:AMINEOXID-MONOMER"/>
<dbReference type="BioCyc" id="MetaCyc:AMINEOXID-MONOMER"/>
<dbReference type="BRENDA" id="1.4.3.21">
    <property type="organism ID" value="2026"/>
</dbReference>
<dbReference type="UniPathway" id="UPA00139">
    <property type="reaction ID" value="UER00723"/>
</dbReference>
<dbReference type="EvolutionaryTrace" id="P46883"/>
<dbReference type="PRO" id="PR:P46883"/>
<dbReference type="Proteomes" id="UP000000625">
    <property type="component" value="Chromosome"/>
</dbReference>
<dbReference type="GO" id="GO:0042597">
    <property type="term" value="C:periplasmic space"/>
    <property type="evidence" value="ECO:0000314"/>
    <property type="project" value="EcoCyc"/>
</dbReference>
<dbReference type="GO" id="GO:0005509">
    <property type="term" value="F:calcium ion binding"/>
    <property type="evidence" value="ECO:0000314"/>
    <property type="project" value="EcoCyc"/>
</dbReference>
<dbReference type="GO" id="GO:0005507">
    <property type="term" value="F:copper ion binding"/>
    <property type="evidence" value="ECO:0000314"/>
    <property type="project" value="EcoCyc"/>
</dbReference>
<dbReference type="GO" id="GO:0008131">
    <property type="term" value="F:primary methylamine oxidase activity"/>
    <property type="evidence" value="ECO:0000314"/>
    <property type="project" value="EcoCyc"/>
</dbReference>
<dbReference type="GO" id="GO:0048038">
    <property type="term" value="F:quinone binding"/>
    <property type="evidence" value="ECO:0000314"/>
    <property type="project" value="EcoCyc"/>
</dbReference>
<dbReference type="GO" id="GO:0009308">
    <property type="term" value="P:amine metabolic process"/>
    <property type="evidence" value="ECO:0000318"/>
    <property type="project" value="GO_Central"/>
</dbReference>
<dbReference type="GO" id="GO:0006559">
    <property type="term" value="P:L-phenylalanine catabolic process"/>
    <property type="evidence" value="ECO:0007669"/>
    <property type="project" value="UniProtKB-UniPathway"/>
</dbReference>
<dbReference type="GO" id="GO:0019607">
    <property type="term" value="P:phenylethylamine catabolic process"/>
    <property type="evidence" value="ECO:0000314"/>
    <property type="project" value="EcoCyc"/>
</dbReference>
<dbReference type="FunFam" id="2.70.98.20:FF:000007">
    <property type="entry name" value="Primary amine oxidase"/>
    <property type="match status" value="1"/>
</dbReference>
<dbReference type="FunFam" id="3.10.450.40:FF:000025">
    <property type="entry name" value="Primary amine oxidase"/>
    <property type="match status" value="1"/>
</dbReference>
<dbReference type="FunFam" id="3.30.457.10:FF:000001">
    <property type="entry name" value="Primary amine oxidase"/>
    <property type="match status" value="1"/>
</dbReference>
<dbReference type="Gene3D" id="3.10.450.40">
    <property type="match status" value="2"/>
</dbReference>
<dbReference type="Gene3D" id="2.70.98.20">
    <property type="entry name" value="Copper amine oxidase, catalytic domain"/>
    <property type="match status" value="1"/>
</dbReference>
<dbReference type="Gene3D" id="3.30.457.10">
    <property type="entry name" value="Copper amine oxidase-like, N-terminal domain"/>
    <property type="match status" value="1"/>
</dbReference>
<dbReference type="InterPro" id="IPR049947">
    <property type="entry name" value="Cu_Am_Ox_Cu-bd"/>
</dbReference>
<dbReference type="InterPro" id="IPR049948">
    <property type="entry name" value="Cu_Am_ox_TPQ-bd"/>
</dbReference>
<dbReference type="InterPro" id="IPR000269">
    <property type="entry name" value="Cu_amine_oxidase"/>
</dbReference>
<dbReference type="InterPro" id="IPR012854">
    <property type="entry name" value="Cu_amine_oxidase-like_N"/>
</dbReference>
<dbReference type="InterPro" id="IPR015798">
    <property type="entry name" value="Cu_amine_oxidase_C"/>
</dbReference>
<dbReference type="InterPro" id="IPR036460">
    <property type="entry name" value="Cu_amine_oxidase_C_sf"/>
</dbReference>
<dbReference type="InterPro" id="IPR016182">
    <property type="entry name" value="Cu_amine_oxidase_N-reg"/>
</dbReference>
<dbReference type="InterPro" id="IPR015800">
    <property type="entry name" value="Cu_amine_oxidase_N2"/>
</dbReference>
<dbReference type="InterPro" id="IPR015802">
    <property type="entry name" value="Cu_amine_oxidase_N3"/>
</dbReference>
<dbReference type="InterPro" id="IPR036582">
    <property type="entry name" value="Mao_N_sf"/>
</dbReference>
<dbReference type="NCBIfam" id="NF011285">
    <property type="entry name" value="PRK14696.1"/>
    <property type="match status" value="1"/>
</dbReference>
<dbReference type="PANTHER" id="PTHR10638:SF41">
    <property type="entry name" value="AMINE OXIDASE"/>
    <property type="match status" value="1"/>
</dbReference>
<dbReference type="PANTHER" id="PTHR10638">
    <property type="entry name" value="COPPER AMINE OXIDASE"/>
    <property type="match status" value="1"/>
</dbReference>
<dbReference type="Pfam" id="PF01179">
    <property type="entry name" value="Cu_amine_oxid"/>
    <property type="match status" value="1"/>
</dbReference>
<dbReference type="Pfam" id="PF07833">
    <property type="entry name" value="Cu_amine_oxidN1"/>
    <property type="match status" value="1"/>
</dbReference>
<dbReference type="Pfam" id="PF02727">
    <property type="entry name" value="Cu_amine_oxidN2"/>
    <property type="match status" value="1"/>
</dbReference>
<dbReference type="Pfam" id="PF02728">
    <property type="entry name" value="Cu_amine_oxidN3"/>
    <property type="match status" value="1"/>
</dbReference>
<dbReference type="SUPFAM" id="SSF49998">
    <property type="entry name" value="Amine oxidase catalytic domain"/>
    <property type="match status" value="1"/>
</dbReference>
<dbReference type="SUPFAM" id="SSF54416">
    <property type="entry name" value="Amine oxidase N-terminal region"/>
    <property type="match status" value="2"/>
</dbReference>
<dbReference type="SUPFAM" id="SSF55383">
    <property type="entry name" value="Copper amine oxidase, domain N"/>
    <property type="match status" value="1"/>
</dbReference>
<dbReference type="PROSITE" id="PS01164">
    <property type="entry name" value="COPPER_AMINE_OXID_1"/>
    <property type="match status" value="1"/>
</dbReference>
<dbReference type="PROSITE" id="PS01165">
    <property type="entry name" value="COPPER_AMINE_OXID_2"/>
    <property type="match status" value="1"/>
</dbReference>
<feature type="signal peptide" evidence="6 7 8">
    <location>
        <begin position="1"/>
        <end position="30"/>
    </location>
</feature>
<feature type="chain" id="PRO_0000035673" description="Primary amine oxidase">
    <location>
        <begin position="31"/>
        <end position="757"/>
    </location>
</feature>
<feature type="region of interest" description="Disordered" evidence="3">
    <location>
        <begin position="680"/>
        <end position="701"/>
    </location>
</feature>
<feature type="active site" description="Proton acceptor" evidence="4 9 17">
    <location>
        <position position="413"/>
    </location>
</feature>
<feature type="active site" description="Schiff-base intermediate with substrate; via topaquinone" evidence="4 17 19 23 24 25">
    <location>
        <position position="496"/>
    </location>
</feature>
<feature type="binding site" evidence="5 11 12 13">
    <location>
        <begin position="411"/>
        <end position="422"/>
    </location>
    <ligand>
        <name>substrate</name>
    </ligand>
</feature>
<feature type="binding site" evidence="5 9 11 12 13 16 21">
    <location>
        <begin position="493"/>
        <end position="498"/>
    </location>
    <ligand>
        <name>substrate</name>
    </ligand>
</feature>
<feature type="binding site" evidence="4 5 9 11 12 13 14 15 16 17 18 19 20 21 22 23 24 25 26">
    <location>
        <position position="554"/>
    </location>
    <ligand>
        <name>Cu cation</name>
        <dbReference type="ChEBI" id="CHEBI:23378"/>
    </ligand>
</feature>
<feature type="binding site" evidence="4 5 9 11 12 13 14 15 16 17 18 19 20 21 22 23 24 25 26">
    <location>
        <position position="556"/>
    </location>
    <ligand>
        <name>Cu cation</name>
        <dbReference type="ChEBI" id="CHEBI:23378"/>
    </ligand>
</feature>
<feature type="binding site" evidence="4 5 9 11 12 13 14 15 16 17 18 19 20 21 22 23 26">
    <location>
        <position position="563"/>
    </location>
    <ligand>
        <name>Ca(2+)</name>
        <dbReference type="ChEBI" id="CHEBI:29108"/>
        <label>1</label>
    </ligand>
</feature>
<feature type="binding site" evidence="2">
    <location>
        <position position="563"/>
    </location>
    <ligand>
        <name>Mn(2+)</name>
        <dbReference type="ChEBI" id="CHEBI:29035"/>
    </ligand>
</feature>
<feature type="binding site" evidence="4 5 9 11 12 13 14 15 16 17 18 19 20 21 22 23 26">
    <location>
        <position position="564"/>
    </location>
    <ligand>
        <name>Ca(2+)</name>
        <dbReference type="ChEBI" id="CHEBI:29108"/>
        <label>1</label>
    </ligand>
</feature>
<feature type="binding site" evidence="4 5 9 11 12 13 14 15 16 17 18 19 20 21 22 23 26">
    <location>
        <position position="565"/>
    </location>
    <ligand>
        <name>Ca(2+)</name>
        <dbReference type="ChEBI" id="CHEBI:29108"/>
        <label>1</label>
    </ligand>
</feature>
<feature type="binding site" evidence="2">
    <location>
        <position position="565"/>
    </location>
    <ligand>
        <name>Mn(2+)</name>
        <dbReference type="ChEBI" id="CHEBI:29035"/>
    </ligand>
</feature>
<feature type="binding site" evidence="4 5 9 11 12 13 14 15 16 17 18 19 20 21 22 23">
    <location>
        <position position="603"/>
    </location>
    <ligand>
        <name>Ca(2+)</name>
        <dbReference type="ChEBI" id="CHEBI:29108"/>
        <label>2</label>
    </ligand>
</feature>
<feature type="binding site" evidence="4 5 9 11 12 13 14 15 16 17 18 19 20 21 22 23">
    <location>
        <position position="697"/>
    </location>
    <ligand>
        <name>Ca(2+)</name>
        <dbReference type="ChEBI" id="CHEBI:29108"/>
        <label>2</label>
    </ligand>
</feature>
<feature type="binding site" evidence="5 12 13 14 17 19 20 23">
    <location>
        <position position="700"/>
    </location>
    <ligand>
        <name>Ca(2+)</name>
        <dbReference type="ChEBI" id="CHEBI:29108"/>
        <label>2</label>
    </ligand>
</feature>
<feature type="binding site" evidence="4 5 9 11 12 13 14 15 16 17 18 19 20 21 22 23">
    <location>
        <position position="702"/>
    </location>
    <ligand>
        <name>Ca(2+)</name>
        <dbReference type="ChEBI" id="CHEBI:29108"/>
        <label>2</label>
    </ligand>
</feature>
<feature type="binding site" evidence="4 5 9 11 12 13 14 15 16 17 18 19 20 21 22 23 26">
    <location>
        <position position="708"/>
    </location>
    <ligand>
        <name>Ca(2+)</name>
        <dbReference type="ChEBI" id="CHEBI:29108"/>
        <label>1</label>
    </ligand>
</feature>
<feature type="binding site" evidence="2">
    <location>
        <position position="708"/>
    </location>
    <ligand>
        <name>Mn(2+)</name>
        <dbReference type="ChEBI" id="CHEBI:29035"/>
    </ligand>
</feature>
<feature type="binding site" evidence="4 5 9 11 12 13 14 15 16 17 18 19 20 21 22 23 26">
    <location>
        <position position="709"/>
    </location>
    <ligand>
        <name>Ca(2+)</name>
        <dbReference type="ChEBI" id="CHEBI:29108"/>
        <label>1</label>
    </ligand>
</feature>
<feature type="binding site">
    <location>
        <position position="709"/>
    </location>
    <ligand>
        <name>Ca(2+)</name>
        <dbReference type="ChEBI" id="CHEBI:29108"/>
        <label>2</label>
    </ligand>
</feature>
<feature type="binding site" evidence="4 5 9 11 12 13 14 15 16 17 18 19 20 21 22 23 24 25 26">
    <location>
        <position position="719"/>
    </location>
    <ligand>
        <name>Cu cation</name>
        <dbReference type="ChEBI" id="CHEBI:23378"/>
    </ligand>
</feature>
<feature type="modified residue" description="2',4',5'-topaquinone" evidence="4 14 15 18 19 20">
    <location>
        <position position="496"/>
    </location>
</feature>
<feature type="sequence variant" description="In strain: W.">
    <original>K</original>
    <variation>E</variation>
    <location>
        <position position="42"/>
    </location>
</feature>
<feature type="sequence variant" description="In strain: W.">
    <original>L</original>
    <variation>I</variation>
    <location>
        <position position="59"/>
    </location>
</feature>
<feature type="sequence conflict" description="In Ref. 9; AA sequence." evidence="10" ref="9">
    <original>G</original>
    <variation>E</variation>
    <location>
        <position position="33"/>
    </location>
</feature>
<feature type="sequence conflict" description="In Ref. 1; BAA04900." evidence="10" ref="1">
    <original>K</original>
    <variation>E</variation>
    <location>
        <position position="248"/>
    </location>
</feature>
<feature type="sequence conflict" description="In Ref. 1; BAA04900." evidence="10" ref="1">
    <original>GY</original>
    <variation>VI</variation>
    <location>
        <begin position="258"/>
        <end position="259"/>
    </location>
</feature>
<feature type="sequence conflict" description="In Ref. 1; BAA04900." evidence="10" ref="1">
    <original>I</original>
    <variation>II</variation>
    <location>
        <position position="276"/>
    </location>
</feature>
<feature type="sequence conflict" description="In Ref. 1." evidence="10" ref="1">
    <location>
        <position position="288"/>
    </location>
</feature>
<feature type="sequence conflict" description="In Ref. 1." evidence="10" ref="1">
    <original>P</original>
    <variation>I</variation>
    <location>
        <position position="290"/>
    </location>
</feature>
<feature type="sequence conflict" description="In Ref. 1; BAA04900." evidence="10" ref="1">
    <original>A</original>
    <variation>P</variation>
    <location>
        <position position="456"/>
    </location>
</feature>
<feature type="sequence conflict" description="In Ref. 1; BAA04900." evidence="10" ref="1">
    <original>H</original>
    <variation>D</variation>
    <location>
        <position position="659"/>
    </location>
</feature>
<feature type="strand" evidence="30">
    <location>
        <begin position="37"/>
        <end position="39"/>
    </location>
</feature>
<feature type="helix" evidence="31">
    <location>
        <begin position="40"/>
        <end position="47"/>
    </location>
</feature>
<feature type="strand" evidence="31">
    <location>
        <begin position="50"/>
        <end position="54"/>
    </location>
</feature>
<feature type="turn" evidence="31">
    <location>
        <begin position="55"/>
        <end position="58"/>
    </location>
</feature>
<feature type="strand" evidence="31">
    <location>
        <begin position="59"/>
        <end position="64"/>
    </location>
</feature>
<feature type="strand" evidence="31">
    <location>
        <begin position="67"/>
        <end position="71"/>
    </location>
</feature>
<feature type="strand" evidence="31">
    <location>
        <begin position="76"/>
        <end position="80"/>
    </location>
</feature>
<feature type="strand" evidence="31">
    <location>
        <begin position="83"/>
        <end position="86"/>
    </location>
</feature>
<feature type="strand" evidence="31">
    <location>
        <begin position="92"/>
        <end position="94"/>
    </location>
</feature>
<feature type="strand" evidence="31">
    <location>
        <begin position="97"/>
        <end position="100"/>
    </location>
</feature>
<feature type="helix" evidence="31">
    <location>
        <begin position="104"/>
        <end position="109"/>
    </location>
</feature>
<feature type="strand" evidence="27">
    <location>
        <begin position="110"/>
        <end position="112"/>
    </location>
</feature>
<feature type="strand" evidence="31">
    <location>
        <begin position="116"/>
        <end position="118"/>
    </location>
</feature>
<feature type="helix" evidence="31">
    <location>
        <begin position="131"/>
        <end position="142"/>
    </location>
</feature>
<feature type="strand" evidence="31">
    <location>
        <begin position="152"/>
        <end position="158"/>
    </location>
</feature>
<feature type="helix" evidence="31">
    <location>
        <begin position="163"/>
        <end position="172"/>
    </location>
</feature>
<feature type="strand" evidence="31">
    <location>
        <begin position="181"/>
        <end position="188"/>
    </location>
</feature>
<feature type="strand" evidence="31">
    <location>
        <begin position="191"/>
        <end position="198"/>
    </location>
</feature>
<feature type="turn" evidence="31">
    <location>
        <begin position="199"/>
        <end position="202"/>
    </location>
</feature>
<feature type="strand" evidence="31">
    <location>
        <begin position="203"/>
        <end position="210"/>
    </location>
</feature>
<feature type="helix" evidence="31">
    <location>
        <begin position="219"/>
        <end position="230"/>
    </location>
</feature>
<feature type="helix" evidence="31">
    <location>
        <begin position="233"/>
        <end position="241"/>
    </location>
</feature>
<feature type="helix" evidence="31">
    <location>
        <begin position="247"/>
        <end position="249"/>
    </location>
</feature>
<feature type="strand" evidence="31">
    <location>
        <begin position="250"/>
        <end position="255"/>
    </location>
</feature>
<feature type="turn" evidence="31">
    <location>
        <begin position="261"/>
        <end position="264"/>
    </location>
</feature>
<feature type="strand" evidence="28">
    <location>
        <begin position="268"/>
        <end position="270"/>
    </location>
</feature>
<feature type="strand" evidence="31">
    <location>
        <begin position="272"/>
        <end position="279"/>
    </location>
</feature>
<feature type="strand" evidence="31">
    <location>
        <begin position="282"/>
        <end position="284"/>
    </location>
</feature>
<feature type="helix" evidence="31">
    <location>
        <begin position="286"/>
        <end position="288"/>
    </location>
</feature>
<feature type="strand" evidence="31">
    <location>
        <begin position="294"/>
        <end position="299"/>
    </location>
</feature>
<feature type="turn" evidence="31">
    <location>
        <begin position="300"/>
        <end position="303"/>
    </location>
</feature>
<feature type="strand" evidence="31">
    <location>
        <begin position="304"/>
        <end position="310"/>
    </location>
</feature>
<feature type="strand" evidence="31">
    <location>
        <begin position="323"/>
        <end position="325"/>
    </location>
</feature>
<feature type="strand" evidence="31">
    <location>
        <begin position="337"/>
        <end position="339"/>
    </location>
</feature>
<feature type="strand" evidence="31">
    <location>
        <begin position="345"/>
        <end position="349"/>
    </location>
</feature>
<feature type="strand" evidence="31">
    <location>
        <begin position="352"/>
        <end position="355"/>
    </location>
</feature>
<feature type="strand" evidence="31">
    <location>
        <begin position="358"/>
        <end position="365"/>
    </location>
</feature>
<feature type="turn" evidence="31">
    <location>
        <begin position="366"/>
        <end position="368"/>
    </location>
</feature>
<feature type="strand" evidence="31">
    <location>
        <begin position="369"/>
        <end position="379"/>
    </location>
</feature>
<feature type="strand" evidence="31">
    <location>
        <begin position="382"/>
        <end position="399"/>
    </location>
</feature>
<feature type="turn" evidence="31">
    <location>
        <begin position="404"/>
        <end position="408"/>
    </location>
</feature>
<feature type="strand" evidence="29">
    <location>
        <begin position="410"/>
        <end position="412"/>
    </location>
</feature>
<feature type="helix" evidence="31">
    <location>
        <begin position="413"/>
        <end position="417"/>
    </location>
</feature>
<feature type="turn" evidence="31">
    <location>
        <begin position="419"/>
        <end position="422"/>
    </location>
</feature>
<feature type="turn" evidence="31">
    <location>
        <begin position="428"/>
        <end position="430"/>
    </location>
</feature>
<feature type="strand" evidence="31">
    <location>
        <begin position="437"/>
        <end position="444"/>
    </location>
</feature>
<feature type="strand" evidence="31">
    <location>
        <begin position="450"/>
        <end position="470"/>
    </location>
</feature>
<feature type="strand" evidence="31">
    <location>
        <begin position="478"/>
        <end position="493"/>
    </location>
</feature>
<feature type="strand" evidence="31">
    <location>
        <begin position="496"/>
        <end position="505"/>
    </location>
</feature>
<feature type="strand" evidence="31">
    <location>
        <begin position="510"/>
        <end position="518"/>
    </location>
</feature>
<feature type="strand" evidence="31">
    <location>
        <begin position="522"/>
        <end position="524"/>
    </location>
</feature>
<feature type="helix" evidence="31">
    <location>
        <begin position="535"/>
        <end position="538"/>
    </location>
</feature>
<feature type="strand" evidence="31">
    <location>
        <begin position="540"/>
        <end position="546"/>
    </location>
</feature>
<feature type="strand" evidence="31">
    <location>
        <begin position="549"/>
        <end position="552"/>
    </location>
</feature>
<feature type="strand" evidence="31">
    <location>
        <begin position="554"/>
        <end position="564"/>
    </location>
</feature>
<feature type="strand" evidence="31">
    <location>
        <begin position="568"/>
        <end position="582"/>
    </location>
</feature>
<feature type="strand" evidence="31">
    <location>
        <begin position="590"/>
        <end position="600"/>
    </location>
</feature>
<feature type="helix" evidence="31">
    <location>
        <begin position="603"/>
        <end position="606"/>
    </location>
</feature>
<feature type="strand" evidence="31">
    <location>
        <begin position="614"/>
        <end position="624"/>
    </location>
</feature>
<feature type="strand" evidence="31">
    <location>
        <begin position="630"/>
        <end position="637"/>
    </location>
</feature>
<feature type="strand" evidence="31">
    <location>
        <begin position="640"/>
        <end position="643"/>
    </location>
</feature>
<feature type="helix" evidence="31">
    <location>
        <begin position="656"/>
        <end position="660"/>
    </location>
</feature>
<feature type="helix" evidence="31">
    <location>
        <begin position="662"/>
        <end position="665"/>
    </location>
</feature>
<feature type="strand" evidence="31">
    <location>
        <begin position="667"/>
        <end position="672"/>
    </location>
</feature>
<feature type="helix" evidence="31">
    <location>
        <begin position="694"/>
        <end position="697"/>
    </location>
</feature>
<feature type="turn" evidence="28">
    <location>
        <begin position="698"/>
        <end position="700"/>
    </location>
</feature>
<feature type="strand" evidence="31">
    <location>
        <begin position="707"/>
        <end position="719"/>
    </location>
</feature>
<feature type="helix" evidence="31">
    <location>
        <begin position="723"/>
        <end position="725"/>
    </location>
</feature>
<feature type="strand" evidence="31">
    <location>
        <begin position="726"/>
        <end position="746"/>
    </location>
</feature>
<organism>
    <name type="scientific">Escherichia coli (strain K12)</name>
    <dbReference type="NCBI Taxonomy" id="83333"/>
    <lineage>
        <taxon>Bacteria</taxon>
        <taxon>Pseudomonadati</taxon>
        <taxon>Pseudomonadota</taxon>
        <taxon>Gammaproteobacteria</taxon>
        <taxon>Enterobacterales</taxon>
        <taxon>Enterobacteriaceae</taxon>
        <taxon>Escherichia</taxon>
    </lineage>
</organism>
<comment type="function">
    <text>The enzyme prefers aromatic over aliphatic amines.</text>
</comment>
<comment type="catalytic activity">
    <reaction evidence="4 5 9">
        <text>a primary methyl amine + O2 + H2O = an aldehyde + H2O2 + NH4(+)</text>
        <dbReference type="Rhea" id="RHEA:16153"/>
        <dbReference type="ChEBI" id="CHEBI:15377"/>
        <dbReference type="ChEBI" id="CHEBI:15379"/>
        <dbReference type="ChEBI" id="CHEBI:16240"/>
        <dbReference type="ChEBI" id="CHEBI:17478"/>
        <dbReference type="ChEBI" id="CHEBI:28938"/>
        <dbReference type="ChEBI" id="CHEBI:228804"/>
        <dbReference type="EC" id="1.4.3.21"/>
    </reaction>
</comment>
<comment type="catalytic activity">
    <reaction evidence="5">
        <text>2-phenylethylamine + O2 + H2O = 2-phenylacetaldehyde + H2O2 + NH4(+)</text>
        <dbReference type="Rhea" id="RHEA:25265"/>
        <dbReference type="ChEBI" id="CHEBI:15377"/>
        <dbReference type="ChEBI" id="CHEBI:15379"/>
        <dbReference type="ChEBI" id="CHEBI:16240"/>
        <dbReference type="ChEBI" id="CHEBI:16424"/>
        <dbReference type="ChEBI" id="CHEBI:28938"/>
        <dbReference type="ChEBI" id="CHEBI:225237"/>
        <dbReference type="EC" id="1.4.3.21"/>
    </reaction>
</comment>
<comment type="cofactor">
    <cofactor evidence="4 5 9">
        <name>Cu cation</name>
        <dbReference type="ChEBI" id="CHEBI:23378"/>
    </cofactor>
    <cofactor evidence="1">
        <name>Zn(2+)</name>
        <dbReference type="ChEBI" id="CHEBI:29105"/>
    </cofactor>
    <text evidence="1 4 5 9">Binds 1 copper ion per subunit. Can also use zinc ion as cofactor (By similarity).</text>
</comment>
<comment type="cofactor">
    <cofactor evidence="4 5 9">
        <name>Ca(2+)</name>
        <dbReference type="ChEBI" id="CHEBI:29108"/>
    </cofactor>
    <text evidence="4 5 9">Binds 2 calcium ions per subunit.</text>
</comment>
<comment type="cofactor">
    <cofactor evidence="4">
        <name>L-topaquinone</name>
        <dbReference type="ChEBI" id="CHEBI:79027"/>
    </cofactor>
    <text evidence="4">Contains 1 topaquinone per subunit.</text>
</comment>
<comment type="cofactor">
    <cofactor evidence="2">
        <name>Mn(2+)</name>
        <dbReference type="ChEBI" id="CHEBI:29035"/>
    </cofactor>
    <text evidence="2">Binds 1 Mn(2+) ion per subunit.</text>
</comment>
<comment type="activity regulation">
    <text evidence="9">Inhibited by 2-hydrazinopyridine.</text>
</comment>
<comment type="pathway">
    <text>Amino-acid degradation; L-phenylalanine degradation; phenylacetate from L-phenylalanine: step 2/3.</text>
</comment>
<comment type="subunit">
    <text evidence="4 5 9">Homodimer.</text>
</comment>
<comment type="subcellular location">
    <subcellularLocation>
        <location>Periplasm</location>
    </subcellularLocation>
</comment>
<comment type="PTM">
    <text evidence="4">Topaquinone (TPQ) is generated by copper-dependent autoxidation of a specific tyrosyl residue.</text>
</comment>
<comment type="similarity">
    <text evidence="10">Belongs to the copper/topaquinone oxidase family.</text>
</comment>
<comment type="caution">
    <text evidence="10">When highly overexpressed there can be substoichiometric amounts of TPQ in the enzyme; this may be due to imperfect conversion of tyrosine to TPQ (see PubMed:8647101).</text>
</comment>
<protein>
    <recommendedName>
        <fullName>Primary amine oxidase</fullName>
        <ecNumber evidence="4 5 9">1.4.3.21</ecNumber>
    </recommendedName>
    <alternativeName>
        <fullName>2-phenylethylamine oxidase</fullName>
    </alternativeName>
    <alternativeName>
        <fullName>Copper amine oxidase</fullName>
    </alternativeName>
    <alternativeName>
        <fullName>Tyramine oxidase</fullName>
    </alternativeName>
</protein>
<name>AMO_ECOLI</name>